<sequence>MAKRDYYEVLGVERGAGEAELKKAYRRLAMKYHPDRNPDDKSAEEKFKEVNEAYEVLSDAGKRMAYDQYGHAGVDQSMGGGAGFGAGGANFSDIFGDVFSDFFGAGRAGARGGPQRGSDLRYTLELNLEEAVRGTTVTIRVPTLVHCKTCDGSGAKKGTTPVTCTTCGGIGQVRMQQGFFSVQQTCPRCHGSGKMIADPCPDCHGQGRVEEHKTLSVKVPAGVDSGDRIRLAGEGEAGTLGGPPGDLYVVVSVREHPIFQRDGKHLYCEVPISFADAALGGELEVPTLDGRVKLKIPEGTQTGKLFRLRGKGVAPVRGGAAGDLMCRVVVETPVNLSKRQRELLEEFRGSLQGNSSHSPKASGWFEGMKRFFDDL</sequence>
<dbReference type="EMBL" id="CP001157">
    <property type="protein sequence ID" value="ACO80418.1"/>
    <property type="molecule type" value="Genomic_DNA"/>
</dbReference>
<dbReference type="RefSeq" id="WP_012702786.1">
    <property type="nucleotide sequence ID" value="NC_012560.1"/>
</dbReference>
<dbReference type="SMR" id="C1DFM2"/>
<dbReference type="STRING" id="322710.Avin_42960"/>
<dbReference type="EnsemblBacteria" id="ACO80418">
    <property type="protein sequence ID" value="ACO80418"/>
    <property type="gene ID" value="Avin_42960"/>
</dbReference>
<dbReference type="GeneID" id="88187211"/>
<dbReference type="KEGG" id="avn:Avin_42960"/>
<dbReference type="eggNOG" id="COG0484">
    <property type="taxonomic scope" value="Bacteria"/>
</dbReference>
<dbReference type="HOGENOM" id="CLU_017633_0_7_6"/>
<dbReference type="OrthoDB" id="9779889at2"/>
<dbReference type="Proteomes" id="UP000002424">
    <property type="component" value="Chromosome"/>
</dbReference>
<dbReference type="GO" id="GO:0005737">
    <property type="term" value="C:cytoplasm"/>
    <property type="evidence" value="ECO:0007669"/>
    <property type="project" value="UniProtKB-SubCell"/>
</dbReference>
<dbReference type="GO" id="GO:0005524">
    <property type="term" value="F:ATP binding"/>
    <property type="evidence" value="ECO:0007669"/>
    <property type="project" value="InterPro"/>
</dbReference>
<dbReference type="GO" id="GO:0031072">
    <property type="term" value="F:heat shock protein binding"/>
    <property type="evidence" value="ECO:0007669"/>
    <property type="project" value="InterPro"/>
</dbReference>
<dbReference type="GO" id="GO:0051082">
    <property type="term" value="F:unfolded protein binding"/>
    <property type="evidence" value="ECO:0007669"/>
    <property type="project" value="UniProtKB-UniRule"/>
</dbReference>
<dbReference type="GO" id="GO:0008270">
    <property type="term" value="F:zinc ion binding"/>
    <property type="evidence" value="ECO:0007669"/>
    <property type="project" value="UniProtKB-UniRule"/>
</dbReference>
<dbReference type="GO" id="GO:0051085">
    <property type="term" value="P:chaperone cofactor-dependent protein refolding"/>
    <property type="evidence" value="ECO:0007669"/>
    <property type="project" value="TreeGrafter"/>
</dbReference>
<dbReference type="GO" id="GO:0006260">
    <property type="term" value="P:DNA replication"/>
    <property type="evidence" value="ECO:0007669"/>
    <property type="project" value="UniProtKB-KW"/>
</dbReference>
<dbReference type="GO" id="GO:0042026">
    <property type="term" value="P:protein refolding"/>
    <property type="evidence" value="ECO:0007669"/>
    <property type="project" value="TreeGrafter"/>
</dbReference>
<dbReference type="GO" id="GO:0009408">
    <property type="term" value="P:response to heat"/>
    <property type="evidence" value="ECO:0007669"/>
    <property type="project" value="InterPro"/>
</dbReference>
<dbReference type="CDD" id="cd06257">
    <property type="entry name" value="DnaJ"/>
    <property type="match status" value="1"/>
</dbReference>
<dbReference type="CDD" id="cd10747">
    <property type="entry name" value="DnaJ_C"/>
    <property type="match status" value="1"/>
</dbReference>
<dbReference type="CDD" id="cd10719">
    <property type="entry name" value="DnaJ_zf"/>
    <property type="match status" value="1"/>
</dbReference>
<dbReference type="FunFam" id="1.10.287.110:FF:000034">
    <property type="entry name" value="Chaperone protein DnaJ"/>
    <property type="match status" value="1"/>
</dbReference>
<dbReference type="FunFam" id="2.10.230.10:FF:000002">
    <property type="entry name" value="Molecular chaperone DnaJ"/>
    <property type="match status" value="1"/>
</dbReference>
<dbReference type="FunFam" id="2.60.260.20:FF:000004">
    <property type="entry name" value="Molecular chaperone DnaJ"/>
    <property type="match status" value="1"/>
</dbReference>
<dbReference type="Gene3D" id="1.10.287.110">
    <property type="entry name" value="DnaJ domain"/>
    <property type="match status" value="1"/>
</dbReference>
<dbReference type="Gene3D" id="2.10.230.10">
    <property type="entry name" value="Heat shock protein DnaJ, cysteine-rich domain"/>
    <property type="match status" value="1"/>
</dbReference>
<dbReference type="Gene3D" id="2.60.260.20">
    <property type="entry name" value="Urease metallochaperone UreE, N-terminal domain"/>
    <property type="match status" value="2"/>
</dbReference>
<dbReference type="HAMAP" id="MF_01152">
    <property type="entry name" value="DnaJ"/>
    <property type="match status" value="1"/>
</dbReference>
<dbReference type="InterPro" id="IPR012724">
    <property type="entry name" value="DnaJ"/>
</dbReference>
<dbReference type="InterPro" id="IPR002939">
    <property type="entry name" value="DnaJ_C"/>
</dbReference>
<dbReference type="InterPro" id="IPR001623">
    <property type="entry name" value="DnaJ_domain"/>
</dbReference>
<dbReference type="InterPro" id="IPR018253">
    <property type="entry name" value="DnaJ_domain_CS"/>
</dbReference>
<dbReference type="InterPro" id="IPR008971">
    <property type="entry name" value="HSP40/DnaJ_pept-bd"/>
</dbReference>
<dbReference type="InterPro" id="IPR001305">
    <property type="entry name" value="HSP_DnaJ_Cys-rich_dom"/>
</dbReference>
<dbReference type="InterPro" id="IPR036410">
    <property type="entry name" value="HSP_DnaJ_Cys-rich_dom_sf"/>
</dbReference>
<dbReference type="InterPro" id="IPR036869">
    <property type="entry name" value="J_dom_sf"/>
</dbReference>
<dbReference type="NCBIfam" id="TIGR02349">
    <property type="entry name" value="DnaJ_bact"/>
    <property type="match status" value="1"/>
</dbReference>
<dbReference type="NCBIfam" id="NF008035">
    <property type="entry name" value="PRK10767.1"/>
    <property type="match status" value="1"/>
</dbReference>
<dbReference type="PANTHER" id="PTHR43096:SF48">
    <property type="entry name" value="CHAPERONE PROTEIN DNAJ"/>
    <property type="match status" value="1"/>
</dbReference>
<dbReference type="PANTHER" id="PTHR43096">
    <property type="entry name" value="DNAJ HOMOLOG 1, MITOCHONDRIAL-RELATED"/>
    <property type="match status" value="1"/>
</dbReference>
<dbReference type="Pfam" id="PF00226">
    <property type="entry name" value="DnaJ"/>
    <property type="match status" value="1"/>
</dbReference>
<dbReference type="Pfam" id="PF01556">
    <property type="entry name" value="DnaJ_C"/>
    <property type="match status" value="1"/>
</dbReference>
<dbReference type="Pfam" id="PF00684">
    <property type="entry name" value="DnaJ_CXXCXGXG"/>
    <property type="match status" value="1"/>
</dbReference>
<dbReference type="PRINTS" id="PR00625">
    <property type="entry name" value="JDOMAIN"/>
</dbReference>
<dbReference type="SMART" id="SM00271">
    <property type="entry name" value="DnaJ"/>
    <property type="match status" value="1"/>
</dbReference>
<dbReference type="SUPFAM" id="SSF46565">
    <property type="entry name" value="Chaperone J-domain"/>
    <property type="match status" value="1"/>
</dbReference>
<dbReference type="SUPFAM" id="SSF57938">
    <property type="entry name" value="DnaJ/Hsp40 cysteine-rich domain"/>
    <property type="match status" value="1"/>
</dbReference>
<dbReference type="SUPFAM" id="SSF49493">
    <property type="entry name" value="HSP40/DnaJ peptide-binding domain"/>
    <property type="match status" value="2"/>
</dbReference>
<dbReference type="PROSITE" id="PS00636">
    <property type="entry name" value="DNAJ_1"/>
    <property type="match status" value="1"/>
</dbReference>
<dbReference type="PROSITE" id="PS50076">
    <property type="entry name" value="DNAJ_2"/>
    <property type="match status" value="1"/>
</dbReference>
<dbReference type="PROSITE" id="PS51188">
    <property type="entry name" value="ZF_CR"/>
    <property type="match status" value="1"/>
</dbReference>
<reference key="1">
    <citation type="journal article" date="2009" name="J. Bacteriol.">
        <title>Genome sequence of Azotobacter vinelandii, an obligate aerobe specialized to support diverse anaerobic metabolic processes.</title>
        <authorList>
            <person name="Setubal J.C."/>
            <person name="Dos Santos P."/>
            <person name="Goldman B.S."/>
            <person name="Ertesvaag H."/>
            <person name="Espin G."/>
            <person name="Rubio L.M."/>
            <person name="Valla S."/>
            <person name="Almeida N.F."/>
            <person name="Balasubramanian D."/>
            <person name="Cromes L."/>
            <person name="Curatti L."/>
            <person name="Du Z."/>
            <person name="Godsy E."/>
            <person name="Goodner B."/>
            <person name="Hellner-Burris K."/>
            <person name="Hernandez J.A."/>
            <person name="Houmiel K."/>
            <person name="Imperial J."/>
            <person name="Kennedy C."/>
            <person name="Larson T.J."/>
            <person name="Latreille P."/>
            <person name="Ligon L.S."/>
            <person name="Lu J."/>
            <person name="Maerk M."/>
            <person name="Miller N.M."/>
            <person name="Norton S."/>
            <person name="O'Carroll I.P."/>
            <person name="Paulsen I."/>
            <person name="Raulfs E.C."/>
            <person name="Roemer R."/>
            <person name="Rosser J."/>
            <person name="Segura D."/>
            <person name="Slater S."/>
            <person name="Stricklin S.L."/>
            <person name="Studholme D.J."/>
            <person name="Sun J."/>
            <person name="Viana C.J."/>
            <person name="Wallin E."/>
            <person name="Wang B."/>
            <person name="Wheeler C."/>
            <person name="Zhu H."/>
            <person name="Dean D.R."/>
            <person name="Dixon R."/>
            <person name="Wood D."/>
        </authorList>
    </citation>
    <scope>NUCLEOTIDE SEQUENCE [LARGE SCALE GENOMIC DNA]</scope>
    <source>
        <strain>DJ / ATCC BAA-1303</strain>
    </source>
</reference>
<proteinExistence type="inferred from homology"/>
<accession>C1DFM2</accession>
<protein>
    <recommendedName>
        <fullName evidence="1">Chaperone protein DnaJ</fullName>
    </recommendedName>
</protein>
<name>DNAJ_AZOVD</name>
<gene>
    <name evidence="1" type="primary">dnaJ</name>
    <name type="ordered locus">Avin_42960</name>
</gene>
<evidence type="ECO:0000255" key="1">
    <source>
        <dbReference type="HAMAP-Rule" id="MF_01152"/>
    </source>
</evidence>
<keyword id="KW-0143">Chaperone</keyword>
<keyword id="KW-0963">Cytoplasm</keyword>
<keyword id="KW-0235">DNA replication</keyword>
<keyword id="KW-0479">Metal-binding</keyword>
<keyword id="KW-0677">Repeat</keyword>
<keyword id="KW-0346">Stress response</keyword>
<keyword id="KW-0862">Zinc</keyword>
<keyword id="KW-0863">Zinc-finger</keyword>
<organism>
    <name type="scientific">Azotobacter vinelandii (strain DJ / ATCC BAA-1303)</name>
    <dbReference type="NCBI Taxonomy" id="322710"/>
    <lineage>
        <taxon>Bacteria</taxon>
        <taxon>Pseudomonadati</taxon>
        <taxon>Pseudomonadota</taxon>
        <taxon>Gammaproteobacteria</taxon>
        <taxon>Pseudomonadales</taxon>
        <taxon>Pseudomonadaceae</taxon>
        <taxon>Azotobacter</taxon>
    </lineage>
</organism>
<comment type="function">
    <text evidence="1">Participates actively in the response to hyperosmotic and heat shock by preventing the aggregation of stress-denatured proteins and by disaggregating proteins, also in an autonomous, DnaK-independent fashion. Unfolded proteins bind initially to DnaJ; upon interaction with the DnaJ-bound protein, DnaK hydrolyzes its bound ATP, resulting in the formation of a stable complex. GrpE releases ADP from DnaK; ATP binding to DnaK triggers the release of the substrate protein, thus completing the reaction cycle. Several rounds of ATP-dependent interactions between DnaJ, DnaK and GrpE are required for fully efficient folding. Also involved, together with DnaK and GrpE, in the DNA replication of plasmids through activation of initiation proteins.</text>
</comment>
<comment type="cofactor">
    <cofactor evidence="1">
        <name>Zn(2+)</name>
        <dbReference type="ChEBI" id="CHEBI:29105"/>
    </cofactor>
    <text evidence="1">Binds 2 Zn(2+) ions per monomer.</text>
</comment>
<comment type="subunit">
    <text evidence="1">Homodimer.</text>
</comment>
<comment type="subcellular location">
    <subcellularLocation>
        <location evidence="1">Cytoplasm</location>
    </subcellularLocation>
</comment>
<comment type="domain">
    <text evidence="1">The J domain is necessary and sufficient to stimulate DnaK ATPase activity. Zinc center 1 plays an important role in the autonomous, DnaK-independent chaperone activity of DnaJ. Zinc center 2 is essential for interaction with DnaK and for DnaJ activity.</text>
</comment>
<comment type="similarity">
    <text evidence="1">Belongs to the DnaJ family.</text>
</comment>
<feature type="chain" id="PRO_1000213678" description="Chaperone protein DnaJ">
    <location>
        <begin position="1"/>
        <end position="375"/>
    </location>
</feature>
<feature type="domain" description="J" evidence="1">
    <location>
        <begin position="5"/>
        <end position="70"/>
    </location>
</feature>
<feature type="repeat" description="CXXCXGXG motif">
    <location>
        <begin position="147"/>
        <end position="154"/>
    </location>
</feature>
<feature type="repeat" description="CXXCXGXG motif">
    <location>
        <begin position="164"/>
        <end position="171"/>
    </location>
</feature>
<feature type="repeat" description="CXXCXGXG motif">
    <location>
        <begin position="186"/>
        <end position="193"/>
    </location>
</feature>
<feature type="repeat" description="CXXCXGXG motif">
    <location>
        <begin position="200"/>
        <end position="207"/>
    </location>
</feature>
<feature type="zinc finger region" description="CR-type" evidence="1">
    <location>
        <begin position="134"/>
        <end position="212"/>
    </location>
</feature>
<feature type="binding site" evidence="1">
    <location>
        <position position="147"/>
    </location>
    <ligand>
        <name>Zn(2+)</name>
        <dbReference type="ChEBI" id="CHEBI:29105"/>
        <label>1</label>
    </ligand>
</feature>
<feature type="binding site" evidence="1">
    <location>
        <position position="150"/>
    </location>
    <ligand>
        <name>Zn(2+)</name>
        <dbReference type="ChEBI" id="CHEBI:29105"/>
        <label>1</label>
    </ligand>
</feature>
<feature type="binding site" evidence="1">
    <location>
        <position position="164"/>
    </location>
    <ligand>
        <name>Zn(2+)</name>
        <dbReference type="ChEBI" id="CHEBI:29105"/>
        <label>2</label>
    </ligand>
</feature>
<feature type="binding site" evidence="1">
    <location>
        <position position="167"/>
    </location>
    <ligand>
        <name>Zn(2+)</name>
        <dbReference type="ChEBI" id="CHEBI:29105"/>
        <label>2</label>
    </ligand>
</feature>
<feature type="binding site" evidence="1">
    <location>
        <position position="186"/>
    </location>
    <ligand>
        <name>Zn(2+)</name>
        <dbReference type="ChEBI" id="CHEBI:29105"/>
        <label>2</label>
    </ligand>
</feature>
<feature type="binding site" evidence="1">
    <location>
        <position position="189"/>
    </location>
    <ligand>
        <name>Zn(2+)</name>
        <dbReference type="ChEBI" id="CHEBI:29105"/>
        <label>2</label>
    </ligand>
</feature>
<feature type="binding site" evidence="1">
    <location>
        <position position="200"/>
    </location>
    <ligand>
        <name>Zn(2+)</name>
        <dbReference type="ChEBI" id="CHEBI:29105"/>
        <label>1</label>
    </ligand>
</feature>
<feature type="binding site" evidence="1">
    <location>
        <position position="203"/>
    </location>
    <ligand>
        <name>Zn(2+)</name>
        <dbReference type="ChEBI" id="CHEBI:29105"/>
        <label>1</label>
    </ligand>
</feature>